<proteinExistence type="evidence at protein level"/>
<sequence>MIEIFKDTGATHDLVYHSKINTFVWDVEFDIVLSDSKELNKCYFVKCFNPYRINGKCDFAVSSIDIFSEGKRLLIENEFNFKITKAVHVATSKDVTEIVLHLSERISSPFPIVKEVVYLD</sequence>
<organism>
    <name type="scientific">Bacillus subtilis (strain 168)</name>
    <dbReference type="NCBI Taxonomy" id="224308"/>
    <lineage>
        <taxon>Bacteria</taxon>
        <taxon>Bacillati</taxon>
        <taxon>Bacillota</taxon>
        <taxon>Bacilli</taxon>
        <taxon>Bacillales</taxon>
        <taxon>Bacillaceae</taxon>
        <taxon>Bacillus</taxon>
    </lineage>
</organism>
<reference key="1">
    <citation type="journal article" date="1998" name="DNA Res.">
        <title>Sequence analysis of the Bacillus subtilis 168 chromosome region between the sspC and odhA loci (184 degrees-180 degrees).</title>
        <authorList>
            <person name="Ghim S.-Y."/>
            <person name="Choi S.-K."/>
            <person name="Shin B.-S."/>
            <person name="Jeong Y.-M."/>
            <person name="Sorokin A."/>
            <person name="Ehrlich S.D."/>
            <person name="Park S.-H."/>
        </authorList>
    </citation>
    <scope>NUCLEOTIDE SEQUENCE [GENOMIC DNA]</scope>
    <source>
        <strain>168</strain>
    </source>
</reference>
<reference key="2">
    <citation type="journal article" date="1997" name="Nature">
        <title>The complete genome sequence of the Gram-positive bacterium Bacillus subtilis.</title>
        <authorList>
            <person name="Kunst F."/>
            <person name="Ogasawara N."/>
            <person name="Moszer I."/>
            <person name="Albertini A.M."/>
            <person name="Alloni G."/>
            <person name="Azevedo V."/>
            <person name="Bertero M.G."/>
            <person name="Bessieres P."/>
            <person name="Bolotin A."/>
            <person name="Borchert S."/>
            <person name="Borriss R."/>
            <person name="Boursier L."/>
            <person name="Brans A."/>
            <person name="Braun M."/>
            <person name="Brignell S.C."/>
            <person name="Bron S."/>
            <person name="Brouillet S."/>
            <person name="Bruschi C.V."/>
            <person name="Caldwell B."/>
            <person name="Capuano V."/>
            <person name="Carter N.M."/>
            <person name="Choi S.-K."/>
            <person name="Codani J.-J."/>
            <person name="Connerton I.F."/>
            <person name="Cummings N.J."/>
            <person name="Daniel R.A."/>
            <person name="Denizot F."/>
            <person name="Devine K.M."/>
            <person name="Duesterhoeft A."/>
            <person name="Ehrlich S.D."/>
            <person name="Emmerson P.T."/>
            <person name="Entian K.-D."/>
            <person name="Errington J."/>
            <person name="Fabret C."/>
            <person name="Ferrari E."/>
            <person name="Foulger D."/>
            <person name="Fritz C."/>
            <person name="Fujita M."/>
            <person name="Fujita Y."/>
            <person name="Fuma S."/>
            <person name="Galizzi A."/>
            <person name="Galleron N."/>
            <person name="Ghim S.-Y."/>
            <person name="Glaser P."/>
            <person name="Goffeau A."/>
            <person name="Golightly E.J."/>
            <person name="Grandi G."/>
            <person name="Guiseppi G."/>
            <person name="Guy B.J."/>
            <person name="Haga K."/>
            <person name="Haiech J."/>
            <person name="Harwood C.R."/>
            <person name="Henaut A."/>
            <person name="Hilbert H."/>
            <person name="Holsappel S."/>
            <person name="Hosono S."/>
            <person name="Hullo M.-F."/>
            <person name="Itaya M."/>
            <person name="Jones L.-M."/>
            <person name="Joris B."/>
            <person name="Karamata D."/>
            <person name="Kasahara Y."/>
            <person name="Klaerr-Blanchard M."/>
            <person name="Klein C."/>
            <person name="Kobayashi Y."/>
            <person name="Koetter P."/>
            <person name="Koningstein G."/>
            <person name="Krogh S."/>
            <person name="Kumano M."/>
            <person name="Kurita K."/>
            <person name="Lapidus A."/>
            <person name="Lardinois S."/>
            <person name="Lauber J."/>
            <person name="Lazarevic V."/>
            <person name="Lee S.-M."/>
            <person name="Levine A."/>
            <person name="Liu H."/>
            <person name="Masuda S."/>
            <person name="Mauel C."/>
            <person name="Medigue C."/>
            <person name="Medina N."/>
            <person name="Mellado R.P."/>
            <person name="Mizuno M."/>
            <person name="Moestl D."/>
            <person name="Nakai S."/>
            <person name="Noback M."/>
            <person name="Noone D."/>
            <person name="O'Reilly M."/>
            <person name="Ogawa K."/>
            <person name="Ogiwara A."/>
            <person name="Oudega B."/>
            <person name="Park S.-H."/>
            <person name="Parro V."/>
            <person name="Pohl T.M."/>
            <person name="Portetelle D."/>
            <person name="Porwollik S."/>
            <person name="Prescott A.M."/>
            <person name="Presecan E."/>
            <person name="Pujic P."/>
            <person name="Purnelle B."/>
            <person name="Rapoport G."/>
            <person name="Rey M."/>
            <person name="Reynolds S."/>
            <person name="Rieger M."/>
            <person name="Rivolta C."/>
            <person name="Rocha E."/>
            <person name="Roche B."/>
            <person name="Rose M."/>
            <person name="Sadaie Y."/>
            <person name="Sato T."/>
            <person name="Scanlan E."/>
            <person name="Schleich S."/>
            <person name="Schroeter R."/>
            <person name="Scoffone F."/>
            <person name="Sekiguchi J."/>
            <person name="Sekowska A."/>
            <person name="Seror S.J."/>
            <person name="Serror P."/>
            <person name="Shin B.-S."/>
            <person name="Soldo B."/>
            <person name="Sorokin A."/>
            <person name="Tacconi E."/>
            <person name="Takagi T."/>
            <person name="Takahashi H."/>
            <person name="Takemaru K."/>
            <person name="Takeuchi M."/>
            <person name="Tamakoshi A."/>
            <person name="Tanaka T."/>
            <person name="Terpstra P."/>
            <person name="Tognoni A."/>
            <person name="Tosato V."/>
            <person name="Uchiyama S."/>
            <person name="Vandenbol M."/>
            <person name="Vannier F."/>
            <person name="Vassarotti A."/>
            <person name="Viari A."/>
            <person name="Wambutt R."/>
            <person name="Wedler E."/>
            <person name="Wedler H."/>
            <person name="Weitzenegger T."/>
            <person name="Winters P."/>
            <person name="Wipat A."/>
            <person name="Yamamoto H."/>
            <person name="Yamane K."/>
            <person name="Yasumoto K."/>
            <person name="Yata K."/>
            <person name="Yoshida K."/>
            <person name="Yoshikawa H.-F."/>
            <person name="Zumstein E."/>
            <person name="Yoshikawa H."/>
            <person name="Danchin A."/>
        </authorList>
    </citation>
    <scope>NUCLEOTIDE SEQUENCE [LARGE SCALE GENOMIC DNA]</scope>
    <source>
        <strain>168</strain>
    </source>
</reference>
<keyword id="KW-0002">3D-structure</keyword>
<keyword id="KW-0945">Host-virus interaction</keyword>
<keyword id="KW-1090">Inhibition of host innate immune response by virus</keyword>
<keyword id="KW-1185">Reference proteome</keyword>
<keyword id="KW-0899">Viral immunoevasion</keyword>
<protein>
    <recommendedName>
        <fullName>SPbeta prophage-derived DSR anti-defense 1</fullName>
        <shortName>DSAD1</shortName>
    </recommendedName>
</protein>
<name>DSAD1_BACSU</name>
<dbReference type="EMBL" id="AF006665">
    <property type="protein sequence ID" value="AAB81142.1"/>
    <property type="status" value="ALT_FRAME"/>
    <property type="molecule type" value="Genomic_DNA"/>
</dbReference>
<dbReference type="EMBL" id="AF015775">
    <property type="protein sequence ID" value="AAB72080.1"/>
    <property type="status" value="ALT_INIT"/>
    <property type="molecule type" value="Genomic_DNA"/>
</dbReference>
<dbReference type="EMBL" id="AL009126">
    <property type="protein sequence ID" value="CAB13878.1"/>
    <property type="molecule type" value="Genomic_DNA"/>
</dbReference>
<dbReference type="RefSeq" id="NP_389868.1">
    <property type="nucleotide sequence ID" value="NC_000964.3"/>
</dbReference>
<dbReference type="RefSeq" id="WP_004399562.1">
    <property type="nucleotide sequence ID" value="NZ_OZ025638.1"/>
</dbReference>
<dbReference type="PDB" id="8XFE">
    <property type="method" value="EM"/>
    <property type="resolution" value="2.98 A"/>
    <property type="chains" value="C=6-120"/>
</dbReference>
<dbReference type="PDBsum" id="8XFE"/>
<dbReference type="EMDB" id="EMD-36982"/>
<dbReference type="EMDB" id="EMD-37272"/>
<dbReference type="EMDB" id="EMD-37603"/>
<dbReference type="EMDB" id="EMD-37607"/>
<dbReference type="SMR" id="Q796A8"/>
<dbReference type="FunCoup" id="Q796A8">
    <property type="interactions" value="56"/>
</dbReference>
<dbReference type="STRING" id="224308.BSU19870"/>
<dbReference type="PaxDb" id="224308-BSU19870"/>
<dbReference type="EnsemblBacteria" id="CAB13878">
    <property type="protein sequence ID" value="CAB13878"/>
    <property type="gene ID" value="BSU_19870"/>
</dbReference>
<dbReference type="GeneID" id="940078"/>
<dbReference type="KEGG" id="bsu:BSU19870"/>
<dbReference type="PATRIC" id="fig|224308.179.peg.2176"/>
<dbReference type="InParanoid" id="Q796A8"/>
<dbReference type="OrthoDB" id="9861296at2"/>
<dbReference type="BioCyc" id="BSUB:BSU19870-MONOMER"/>
<dbReference type="Proteomes" id="UP000001570">
    <property type="component" value="Chromosome"/>
</dbReference>
<dbReference type="GO" id="GO:0052170">
    <property type="term" value="P:symbiont-mediated suppression of host innate immune response"/>
    <property type="evidence" value="ECO:0007669"/>
    <property type="project" value="UniProtKB-KW"/>
</dbReference>
<feature type="chain" id="PRO_0000359966" description="SPbeta prophage-derived DSR anti-defense 1">
    <location>
        <begin position="1"/>
        <end position="120"/>
    </location>
</feature>
<evidence type="ECO:0000250" key="1">
    <source>
        <dbReference type="UniProtKB" id="O64191"/>
    </source>
</evidence>
<evidence type="ECO:0000305" key="2"/>
<gene>
    <name type="primary">yotI</name>
    <name type="synonym">yodW</name>
    <name type="synonym">yokF</name>
    <name type="ordered locus">BSU19870</name>
</gene>
<accession>Q796A8</accession>
<accession>O30465</accession>
<accession>O30705</accession>
<comment type="function">
    <text evidence="1">Counteracts the defense-associated sirtuin 2 (DSR2) defense system of the host (By similarity). Inhibits the NADase activity of host DSR2 by competing with the tail tube protein that normally activates DSR2 (By similarity).</text>
</comment>
<comment type="subunit">
    <text evidence="1">Interacts with Bacillus subtilis DSR2 (via C-terminus) in a 2:4 ratio; this interaction leads to the absence of activation of the NADase defense activity of DSR2.</text>
</comment>
<comment type="similarity">
    <text evidence="2">Belongs to the DSR anti-defense 1 family.</text>
</comment>
<comment type="sequence caution" evidence="2">
    <conflict type="erroneous initiation">
        <sequence resource="EMBL-CDS" id="AAB72080"/>
    </conflict>
</comment>
<comment type="sequence caution" evidence="2">
    <conflict type="frameshift">
        <sequence resource="EMBL-CDS" id="AAB81142"/>
    </conflict>
</comment>